<sequence>MGQVLPLVTRQGDRIAIVSGLRTPFARQATAFHGIPAVDLGKMVVGELLARTEIPAEVIEQLVFGQVVQMPEAPNIAREIVLGTGMNVHTDAYSVSRACATSFQAVANVAESLMAGTIRAGIAGGADSSSVLPIGVSKKLARVLVDVNKARTMSQRLKLFSRLRLRDLMPVPPAVAEYSTGLRMGDTAEQMAKTYGITREQQDALAHRSHQRAAQAWSEGKLKEEVMTAFIPPYKQPLVEDNNIRGNSSLADYAKLRPAFDRKHGTVTAANSTPLTDGAAAVILMTESRAKELGLVPLGYLRSYAFTAIDVWQDMLLGPAWSTPLALERAGLTMGDLTLIDMHEAFAAQTLANIQLLGSERFARDVLGRAHATGEVDESKFNVLGGSIAYGHPFAATGARMITQTLHELRRRGGGFGLVTACAAGGLGAAMVLEAE</sequence>
<gene>
    <name evidence="1" type="primary">fadI</name>
    <name type="ordered locus">Ecok1_22350</name>
    <name type="ORF">APECO1_4224</name>
</gene>
<protein>
    <recommendedName>
        <fullName evidence="1">3-ketoacyl-CoA thiolase</fullName>
        <ecNumber evidence="1">2.3.1.16</ecNumber>
    </recommendedName>
    <alternativeName>
        <fullName evidence="1">ACSs</fullName>
    </alternativeName>
    <alternativeName>
        <fullName evidence="1">Acetyl-CoA acyltransferase</fullName>
    </alternativeName>
    <alternativeName>
        <fullName evidence="1">Acyl-CoA ligase</fullName>
    </alternativeName>
    <alternativeName>
        <fullName evidence="1">Beta-ketothiolase</fullName>
    </alternativeName>
    <alternativeName>
        <fullName evidence="1">Fatty acid oxidation complex subunit beta</fullName>
    </alternativeName>
</protein>
<organism>
    <name type="scientific">Escherichia coli O1:K1 / APEC</name>
    <dbReference type="NCBI Taxonomy" id="405955"/>
    <lineage>
        <taxon>Bacteria</taxon>
        <taxon>Pseudomonadati</taxon>
        <taxon>Pseudomonadota</taxon>
        <taxon>Gammaproteobacteria</taxon>
        <taxon>Enterobacterales</taxon>
        <taxon>Enterobacteriaceae</taxon>
        <taxon>Escherichia</taxon>
    </lineage>
</organism>
<accession>A1ADI9</accession>
<proteinExistence type="inferred from homology"/>
<reference key="1">
    <citation type="journal article" date="2007" name="J. Bacteriol.">
        <title>The genome sequence of avian pathogenic Escherichia coli strain O1:K1:H7 shares strong similarities with human extraintestinal pathogenic E. coli genomes.</title>
        <authorList>
            <person name="Johnson T.J."/>
            <person name="Kariyawasam S."/>
            <person name="Wannemuehler Y."/>
            <person name="Mangiamele P."/>
            <person name="Johnson S.J."/>
            <person name="Doetkott C."/>
            <person name="Skyberg J.A."/>
            <person name="Lynne A.M."/>
            <person name="Johnson J.R."/>
            <person name="Nolan L.K."/>
        </authorList>
    </citation>
    <scope>NUCLEOTIDE SEQUENCE [LARGE SCALE GENOMIC DNA]</scope>
</reference>
<comment type="function">
    <text evidence="1">Catalyzes the final step of fatty acid oxidation in which acetyl-CoA is released and the CoA ester of a fatty acid two carbons shorter is formed.</text>
</comment>
<comment type="catalytic activity">
    <reaction evidence="1">
        <text>an acyl-CoA + acetyl-CoA = a 3-oxoacyl-CoA + CoA</text>
        <dbReference type="Rhea" id="RHEA:21564"/>
        <dbReference type="ChEBI" id="CHEBI:57287"/>
        <dbReference type="ChEBI" id="CHEBI:57288"/>
        <dbReference type="ChEBI" id="CHEBI:58342"/>
        <dbReference type="ChEBI" id="CHEBI:90726"/>
        <dbReference type="EC" id="2.3.1.16"/>
    </reaction>
</comment>
<comment type="pathway">
    <text evidence="1">Lipid metabolism; fatty acid beta-oxidation.</text>
</comment>
<comment type="subunit">
    <text evidence="1">Heterotetramer of two alpha chains (FadJ) and two beta chains (FadI).</text>
</comment>
<comment type="subcellular location">
    <subcellularLocation>
        <location evidence="1">Cytoplasm</location>
    </subcellularLocation>
</comment>
<comment type="similarity">
    <text evidence="1">Belongs to the thiolase-like superfamily. Thiolase family.</text>
</comment>
<dbReference type="EC" id="2.3.1.16" evidence="1"/>
<dbReference type="EMBL" id="CP000468">
    <property type="protein sequence ID" value="ABJ01729.1"/>
    <property type="molecule type" value="Genomic_DNA"/>
</dbReference>
<dbReference type="RefSeq" id="WP_000531977.1">
    <property type="nucleotide sequence ID" value="NZ_CADILS010000099.1"/>
</dbReference>
<dbReference type="SMR" id="A1ADI9"/>
<dbReference type="KEGG" id="ecv:APECO1_4224"/>
<dbReference type="HOGENOM" id="CLU_031026_2_0_6"/>
<dbReference type="UniPathway" id="UPA00659"/>
<dbReference type="Proteomes" id="UP000008216">
    <property type="component" value="Chromosome"/>
</dbReference>
<dbReference type="GO" id="GO:0005829">
    <property type="term" value="C:cytosol"/>
    <property type="evidence" value="ECO:0007669"/>
    <property type="project" value="TreeGrafter"/>
</dbReference>
<dbReference type="GO" id="GO:0003988">
    <property type="term" value="F:acetyl-CoA C-acyltransferase activity"/>
    <property type="evidence" value="ECO:0007669"/>
    <property type="project" value="UniProtKB-UniRule"/>
</dbReference>
<dbReference type="GO" id="GO:0006635">
    <property type="term" value="P:fatty acid beta-oxidation"/>
    <property type="evidence" value="ECO:0007669"/>
    <property type="project" value="UniProtKB-UniRule"/>
</dbReference>
<dbReference type="CDD" id="cd00751">
    <property type="entry name" value="thiolase"/>
    <property type="match status" value="1"/>
</dbReference>
<dbReference type="FunFam" id="3.40.47.10:FF:000011">
    <property type="entry name" value="3-ketoacyl-CoA thiolase"/>
    <property type="match status" value="1"/>
</dbReference>
<dbReference type="Gene3D" id="3.40.47.10">
    <property type="match status" value="1"/>
</dbReference>
<dbReference type="HAMAP" id="MF_01618">
    <property type="entry name" value="FadI"/>
    <property type="match status" value="1"/>
</dbReference>
<dbReference type="InterPro" id="IPR012806">
    <property type="entry name" value="Ac-CoA_C-AcTrfase_FadI"/>
</dbReference>
<dbReference type="InterPro" id="IPR002155">
    <property type="entry name" value="Thiolase"/>
</dbReference>
<dbReference type="InterPro" id="IPR016039">
    <property type="entry name" value="Thiolase-like"/>
</dbReference>
<dbReference type="InterPro" id="IPR020615">
    <property type="entry name" value="Thiolase_acyl_enz_int_AS"/>
</dbReference>
<dbReference type="InterPro" id="IPR020610">
    <property type="entry name" value="Thiolase_AS"/>
</dbReference>
<dbReference type="InterPro" id="IPR020617">
    <property type="entry name" value="Thiolase_C"/>
</dbReference>
<dbReference type="InterPro" id="IPR020613">
    <property type="entry name" value="Thiolase_CS"/>
</dbReference>
<dbReference type="InterPro" id="IPR020616">
    <property type="entry name" value="Thiolase_N"/>
</dbReference>
<dbReference type="NCBIfam" id="TIGR01930">
    <property type="entry name" value="AcCoA-C-Actrans"/>
    <property type="match status" value="1"/>
</dbReference>
<dbReference type="NCBIfam" id="TIGR02446">
    <property type="entry name" value="FadI"/>
    <property type="match status" value="1"/>
</dbReference>
<dbReference type="NCBIfam" id="NF006516">
    <property type="entry name" value="PRK08963.1"/>
    <property type="match status" value="1"/>
</dbReference>
<dbReference type="PANTHER" id="PTHR18919:SF107">
    <property type="entry name" value="ACETYL-COA ACETYLTRANSFERASE, CYTOSOLIC"/>
    <property type="match status" value="1"/>
</dbReference>
<dbReference type="PANTHER" id="PTHR18919">
    <property type="entry name" value="ACETYL-COA C-ACYLTRANSFERASE"/>
    <property type="match status" value="1"/>
</dbReference>
<dbReference type="Pfam" id="PF02803">
    <property type="entry name" value="Thiolase_C"/>
    <property type="match status" value="1"/>
</dbReference>
<dbReference type="Pfam" id="PF00108">
    <property type="entry name" value="Thiolase_N"/>
    <property type="match status" value="1"/>
</dbReference>
<dbReference type="PIRSF" id="PIRSF000429">
    <property type="entry name" value="Ac-CoA_Ac_transf"/>
    <property type="match status" value="1"/>
</dbReference>
<dbReference type="SUPFAM" id="SSF53901">
    <property type="entry name" value="Thiolase-like"/>
    <property type="match status" value="2"/>
</dbReference>
<dbReference type="PROSITE" id="PS00098">
    <property type="entry name" value="THIOLASE_1"/>
    <property type="match status" value="1"/>
</dbReference>
<dbReference type="PROSITE" id="PS00737">
    <property type="entry name" value="THIOLASE_2"/>
    <property type="match status" value="1"/>
</dbReference>
<dbReference type="PROSITE" id="PS00099">
    <property type="entry name" value="THIOLASE_3"/>
    <property type="match status" value="1"/>
</dbReference>
<keyword id="KW-0012">Acyltransferase</keyword>
<keyword id="KW-0963">Cytoplasm</keyword>
<keyword id="KW-0276">Fatty acid metabolism</keyword>
<keyword id="KW-0442">Lipid degradation</keyword>
<keyword id="KW-0443">Lipid metabolism</keyword>
<keyword id="KW-1185">Reference proteome</keyword>
<keyword id="KW-0808">Transferase</keyword>
<name>FADI_ECOK1</name>
<evidence type="ECO:0000255" key="1">
    <source>
        <dbReference type="HAMAP-Rule" id="MF_01618"/>
    </source>
</evidence>
<feature type="chain" id="PRO_1000069497" description="3-ketoacyl-CoA thiolase">
    <location>
        <begin position="1"/>
        <end position="436"/>
    </location>
</feature>
<feature type="active site" description="Acyl-thioester intermediate" evidence="1">
    <location>
        <position position="99"/>
    </location>
</feature>
<feature type="active site" description="Proton acceptor" evidence="1">
    <location>
        <position position="392"/>
    </location>
</feature>
<feature type="active site" description="Proton acceptor" evidence="1">
    <location>
        <position position="422"/>
    </location>
</feature>